<accession>Q6F7A7</accession>
<evidence type="ECO:0000255" key="1">
    <source>
        <dbReference type="HAMAP-Rule" id="MF_00278"/>
    </source>
</evidence>
<sequence length="205" mass="22720">MTRIALLDYGMGNLHSAAKALEHVGATVDVTNDPKLIAKADKIVFPGVGAMRDCMQGMHEAGIDEVVRQAVFNKPVLAICVGMQALLESSEENGGVPALGIFEGAVKHFPDLGHLKVPHMGWNQVYQNDPAHPMWNNIDQDSRFYFVHSYYVEPKQSDLIAATCDYGLQFCTAIHKDNLFATQFHPEKSHTAGLQLLKNFVEWNI</sequence>
<comment type="function">
    <text evidence="1">IGPS catalyzes the conversion of PRFAR and glutamine to IGP, AICAR and glutamate. The HisH subunit catalyzes the hydrolysis of glutamine to glutamate and ammonia as part of the synthesis of IGP and AICAR. The resulting ammonia molecule is channeled to the active site of HisF.</text>
</comment>
<comment type="catalytic activity">
    <reaction evidence="1">
        <text>5-[(5-phospho-1-deoxy-D-ribulos-1-ylimino)methylamino]-1-(5-phospho-beta-D-ribosyl)imidazole-4-carboxamide + L-glutamine = D-erythro-1-(imidazol-4-yl)glycerol 3-phosphate + 5-amino-1-(5-phospho-beta-D-ribosyl)imidazole-4-carboxamide + L-glutamate + H(+)</text>
        <dbReference type="Rhea" id="RHEA:24793"/>
        <dbReference type="ChEBI" id="CHEBI:15378"/>
        <dbReference type="ChEBI" id="CHEBI:29985"/>
        <dbReference type="ChEBI" id="CHEBI:58278"/>
        <dbReference type="ChEBI" id="CHEBI:58359"/>
        <dbReference type="ChEBI" id="CHEBI:58475"/>
        <dbReference type="ChEBI" id="CHEBI:58525"/>
        <dbReference type="EC" id="4.3.2.10"/>
    </reaction>
</comment>
<comment type="catalytic activity">
    <reaction evidence="1">
        <text>L-glutamine + H2O = L-glutamate + NH4(+)</text>
        <dbReference type="Rhea" id="RHEA:15889"/>
        <dbReference type="ChEBI" id="CHEBI:15377"/>
        <dbReference type="ChEBI" id="CHEBI:28938"/>
        <dbReference type="ChEBI" id="CHEBI:29985"/>
        <dbReference type="ChEBI" id="CHEBI:58359"/>
        <dbReference type="EC" id="3.5.1.2"/>
    </reaction>
</comment>
<comment type="pathway">
    <text evidence="1">Amino-acid biosynthesis; L-histidine biosynthesis; L-histidine from 5-phospho-alpha-D-ribose 1-diphosphate: step 5/9.</text>
</comment>
<comment type="subunit">
    <text evidence="1">Heterodimer of HisH and HisF.</text>
</comment>
<comment type="subcellular location">
    <subcellularLocation>
        <location evidence="1">Cytoplasm</location>
    </subcellularLocation>
</comment>
<reference key="1">
    <citation type="journal article" date="2004" name="Nucleic Acids Res.">
        <title>Unique features revealed by the genome sequence of Acinetobacter sp. ADP1, a versatile and naturally transformation competent bacterium.</title>
        <authorList>
            <person name="Barbe V."/>
            <person name="Vallenet D."/>
            <person name="Fonknechten N."/>
            <person name="Kreimeyer A."/>
            <person name="Oztas S."/>
            <person name="Labarre L."/>
            <person name="Cruveiller S."/>
            <person name="Robert C."/>
            <person name="Duprat S."/>
            <person name="Wincker P."/>
            <person name="Ornston L.N."/>
            <person name="Weissenbach J."/>
            <person name="Marliere P."/>
            <person name="Cohen G.N."/>
            <person name="Medigue C."/>
        </authorList>
    </citation>
    <scope>NUCLEOTIDE SEQUENCE [LARGE SCALE GENOMIC DNA]</scope>
    <source>
        <strain>ATCC 33305 / BD413 / ADP1</strain>
    </source>
</reference>
<organism>
    <name type="scientific">Acinetobacter baylyi (strain ATCC 33305 / BD413 / ADP1)</name>
    <dbReference type="NCBI Taxonomy" id="62977"/>
    <lineage>
        <taxon>Bacteria</taxon>
        <taxon>Pseudomonadati</taxon>
        <taxon>Pseudomonadota</taxon>
        <taxon>Gammaproteobacteria</taxon>
        <taxon>Moraxellales</taxon>
        <taxon>Moraxellaceae</taxon>
        <taxon>Acinetobacter</taxon>
    </lineage>
</organism>
<dbReference type="EC" id="4.3.2.10" evidence="1"/>
<dbReference type="EC" id="3.5.1.2" evidence="1"/>
<dbReference type="EMBL" id="CR543861">
    <property type="protein sequence ID" value="CAG70058.1"/>
    <property type="molecule type" value="Genomic_DNA"/>
</dbReference>
<dbReference type="RefSeq" id="WP_004923622.1">
    <property type="nucleotide sequence ID" value="NC_005966.1"/>
</dbReference>
<dbReference type="SMR" id="Q6F7A7"/>
<dbReference type="STRING" id="202950.GCA_001485005_02234"/>
<dbReference type="MEROPS" id="C26.965"/>
<dbReference type="GeneID" id="45235590"/>
<dbReference type="KEGG" id="aci:ACIAD3396"/>
<dbReference type="eggNOG" id="COG0118">
    <property type="taxonomic scope" value="Bacteria"/>
</dbReference>
<dbReference type="HOGENOM" id="CLU_071837_2_0_6"/>
<dbReference type="OrthoDB" id="9807137at2"/>
<dbReference type="BioCyc" id="ASP62977:ACIAD_RS15375-MONOMER"/>
<dbReference type="UniPathway" id="UPA00031">
    <property type="reaction ID" value="UER00010"/>
</dbReference>
<dbReference type="Proteomes" id="UP000000430">
    <property type="component" value="Chromosome"/>
</dbReference>
<dbReference type="GO" id="GO:0005737">
    <property type="term" value="C:cytoplasm"/>
    <property type="evidence" value="ECO:0007669"/>
    <property type="project" value="UniProtKB-SubCell"/>
</dbReference>
<dbReference type="GO" id="GO:0004359">
    <property type="term" value="F:glutaminase activity"/>
    <property type="evidence" value="ECO:0007669"/>
    <property type="project" value="UniProtKB-EC"/>
</dbReference>
<dbReference type="GO" id="GO:0000107">
    <property type="term" value="F:imidazoleglycerol-phosphate synthase activity"/>
    <property type="evidence" value="ECO:0007669"/>
    <property type="project" value="UniProtKB-UniRule"/>
</dbReference>
<dbReference type="GO" id="GO:0016829">
    <property type="term" value="F:lyase activity"/>
    <property type="evidence" value="ECO:0007669"/>
    <property type="project" value="UniProtKB-KW"/>
</dbReference>
<dbReference type="GO" id="GO:0000105">
    <property type="term" value="P:L-histidine biosynthetic process"/>
    <property type="evidence" value="ECO:0007669"/>
    <property type="project" value="UniProtKB-UniRule"/>
</dbReference>
<dbReference type="CDD" id="cd01748">
    <property type="entry name" value="GATase1_IGP_Synthase"/>
    <property type="match status" value="1"/>
</dbReference>
<dbReference type="FunFam" id="3.40.50.880:FF:000009">
    <property type="entry name" value="Imidazole glycerol phosphate synthase subunit HisH"/>
    <property type="match status" value="1"/>
</dbReference>
<dbReference type="Gene3D" id="3.40.50.880">
    <property type="match status" value="1"/>
</dbReference>
<dbReference type="HAMAP" id="MF_00278">
    <property type="entry name" value="HisH"/>
    <property type="match status" value="1"/>
</dbReference>
<dbReference type="InterPro" id="IPR029062">
    <property type="entry name" value="Class_I_gatase-like"/>
</dbReference>
<dbReference type="InterPro" id="IPR017926">
    <property type="entry name" value="GATASE"/>
</dbReference>
<dbReference type="InterPro" id="IPR010139">
    <property type="entry name" value="Imidazole-glycPsynth_HisH"/>
</dbReference>
<dbReference type="NCBIfam" id="TIGR01855">
    <property type="entry name" value="IMP_synth_hisH"/>
    <property type="match status" value="1"/>
</dbReference>
<dbReference type="PANTHER" id="PTHR42701">
    <property type="entry name" value="IMIDAZOLE GLYCEROL PHOSPHATE SYNTHASE SUBUNIT HISH"/>
    <property type="match status" value="1"/>
</dbReference>
<dbReference type="PANTHER" id="PTHR42701:SF2">
    <property type="entry name" value="IMIDAZOLE GLYCEROL PHOSPHATE SYNTHASE SUBUNIT HISH 1"/>
    <property type="match status" value="1"/>
</dbReference>
<dbReference type="Pfam" id="PF00117">
    <property type="entry name" value="GATase"/>
    <property type="match status" value="1"/>
</dbReference>
<dbReference type="PIRSF" id="PIRSF000495">
    <property type="entry name" value="Amidotransf_hisH"/>
    <property type="match status" value="1"/>
</dbReference>
<dbReference type="SUPFAM" id="SSF52317">
    <property type="entry name" value="Class I glutamine amidotransferase-like"/>
    <property type="match status" value="1"/>
</dbReference>
<dbReference type="PROSITE" id="PS51273">
    <property type="entry name" value="GATASE_TYPE_1"/>
    <property type="match status" value="1"/>
</dbReference>
<gene>
    <name evidence="1" type="primary">hisH</name>
    <name type="ordered locus">ACIAD3396</name>
</gene>
<name>HIS5_ACIAD</name>
<feature type="chain" id="PRO_0000152332" description="Imidazole glycerol phosphate synthase subunit HisH">
    <location>
        <begin position="1"/>
        <end position="205"/>
    </location>
</feature>
<feature type="domain" description="Glutamine amidotransferase type-1" evidence="1">
    <location>
        <begin position="3"/>
        <end position="205"/>
    </location>
</feature>
<feature type="active site" description="Nucleophile" evidence="1">
    <location>
        <position position="80"/>
    </location>
</feature>
<feature type="active site" evidence="1">
    <location>
        <position position="185"/>
    </location>
</feature>
<feature type="active site" evidence="1">
    <location>
        <position position="187"/>
    </location>
</feature>
<keyword id="KW-0028">Amino-acid biosynthesis</keyword>
<keyword id="KW-0963">Cytoplasm</keyword>
<keyword id="KW-0315">Glutamine amidotransferase</keyword>
<keyword id="KW-0368">Histidine biosynthesis</keyword>
<keyword id="KW-0378">Hydrolase</keyword>
<keyword id="KW-0456">Lyase</keyword>
<proteinExistence type="inferred from homology"/>
<protein>
    <recommendedName>
        <fullName evidence="1">Imidazole glycerol phosphate synthase subunit HisH</fullName>
        <ecNumber evidence="1">4.3.2.10</ecNumber>
    </recommendedName>
    <alternativeName>
        <fullName evidence="1">IGP synthase glutaminase subunit</fullName>
        <ecNumber evidence="1">3.5.1.2</ecNumber>
    </alternativeName>
    <alternativeName>
        <fullName evidence="1">IGP synthase subunit HisH</fullName>
    </alternativeName>
    <alternativeName>
        <fullName evidence="1">ImGP synthase subunit HisH</fullName>
        <shortName evidence="1">IGPS subunit HisH</shortName>
    </alternativeName>
</protein>